<comment type="function">
    <text evidence="1">Binds to the sigma-S subunit of RNA polymerase, activating expression of sigma-S-regulated genes. Stimulates RNA polymerase holoenzyme formation and may bind to several other sigma factors, such as sigma-70 and sigma-32.</text>
</comment>
<comment type="subcellular location">
    <subcellularLocation>
        <location evidence="1">Cytoplasm</location>
    </subcellularLocation>
</comment>
<comment type="similarity">
    <text evidence="1">Belongs to the Crl family.</text>
</comment>
<organism>
    <name type="scientific">Escherichia fergusonii (strain ATCC 35469 / DSM 13698 / CCUG 18766 / IAM 14443 / JCM 21226 / LMG 7866 / NBRC 102419 / NCTC 12128 / CDC 0568-73)</name>
    <dbReference type="NCBI Taxonomy" id="585054"/>
    <lineage>
        <taxon>Bacteria</taxon>
        <taxon>Pseudomonadati</taxon>
        <taxon>Pseudomonadota</taxon>
        <taxon>Gammaproteobacteria</taxon>
        <taxon>Enterobacterales</taxon>
        <taxon>Enterobacteriaceae</taxon>
        <taxon>Escherichia</taxon>
    </lineage>
</organism>
<dbReference type="EMBL" id="CU928158">
    <property type="protein sequence ID" value="CAQ90233.1"/>
    <property type="molecule type" value="Genomic_DNA"/>
</dbReference>
<dbReference type="RefSeq" id="WP_000174676.1">
    <property type="nucleotide sequence ID" value="NC_011740.1"/>
</dbReference>
<dbReference type="SMR" id="B7LNG0"/>
<dbReference type="GeneID" id="75056225"/>
<dbReference type="KEGG" id="efe:EFER_2738"/>
<dbReference type="HOGENOM" id="CLU_136773_0_0_6"/>
<dbReference type="OrthoDB" id="6428303at2"/>
<dbReference type="Proteomes" id="UP000000745">
    <property type="component" value="Chromosome"/>
</dbReference>
<dbReference type="GO" id="GO:0005737">
    <property type="term" value="C:cytoplasm"/>
    <property type="evidence" value="ECO:0007669"/>
    <property type="project" value="UniProtKB-SubCell"/>
</dbReference>
<dbReference type="GO" id="GO:0045893">
    <property type="term" value="P:positive regulation of DNA-templated transcription"/>
    <property type="evidence" value="ECO:0007669"/>
    <property type="project" value="UniProtKB-UniRule"/>
</dbReference>
<dbReference type="FunFam" id="3.30.310.230:FF:000001">
    <property type="entry name" value="Sigma factor-binding protein Crl"/>
    <property type="match status" value="1"/>
</dbReference>
<dbReference type="Gene3D" id="3.30.310.230">
    <property type="entry name" value="Sigma factor-binding protein Crl monomer"/>
    <property type="match status" value="1"/>
</dbReference>
<dbReference type="HAMAP" id="MF_01178">
    <property type="entry name" value="Crl"/>
    <property type="match status" value="1"/>
</dbReference>
<dbReference type="InterPro" id="IPR009986">
    <property type="entry name" value="Tscrpt_reg_Crl"/>
</dbReference>
<dbReference type="InterPro" id="IPR038208">
    <property type="entry name" value="Tscrpt_reg_Crl_sf"/>
</dbReference>
<dbReference type="NCBIfam" id="NF008217">
    <property type="entry name" value="PRK10984.1"/>
    <property type="match status" value="1"/>
</dbReference>
<dbReference type="Pfam" id="PF07417">
    <property type="entry name" value="Crl"/>
    <property type="match status" value="1"/>
</dbReference>
<gene>
    <name evidence="1" type="primary">crl</name>
    <name type="ordered locus">EFER_2738</name>
</gene>
<reference key="1">
    <citation type="journal article" date="2009" name="PLoS Genet.">
        <title>Organised genome dynamics in the Escherichia coli species results in highly diverse adaptive paths.</title>
        <authorList>
            <person name="Touchon M."/>
            <person name="Hoede C."/>
            <person name="Tenaillon O."/>
            <person name="Barbe V."/>
            <person name="Baeriswyl S."/>
            <person name="Bidet P."/>
            <person name="Bingen E."/>
            <person name="Bonacorsi S."/>
            <person name="Bouchier C."/>
            <person name="Bouvet O."/>
            <person name="Calteau A."/>
            <person name="Chiapello H."/>
            <person name="Clermont O."/>
            <person name="Cruveiller S."/>
            <person name="Danchin A."/>
            <person name="Diard M."/>
            <person name="Dossat C."/>
            <person name="Karoui M.E."/>
            <person name="Frapy E."/>
            <person name="Garry L."/>
            <person name="Ghigo J.M."/>
            <person name="Gilles A.M."/>
            <person name="Johnson J."/>
            <person name="Le Bouguenec C."/>
            <person name="Lescat M."/>
            <person name="Mangenot S."/>
            <person name="Martinez-Jehanne V."/>
            <person name="Matic I."/>
            <person name="Nassif X."/>
            <person name="Oztas S."/>
            <person name="Petit M.A."/>
            <person name="Pichon C."/>
            <person name="Rouy Z."/>
            <person name="Ruf C.S."/>
            <person name="Schneider D."/>
            <person name="Tourret J."/>
            <person name="Vacherie B."/>
            <person name="Vallenet D."/>
            <person name="Medigue C."/>
            <person name="Rocha E.P.C."/>
            <person name="Denamur E."/>
        </authorList>
    </citation>
    <scope>NUCLEOTIDE SEQUENCE [LARGE SCALE GENOMIC DNA]</scope>
    <source>
        <strain>ATCC 35469 / DSM 13698 / BCRC 15582 / CCUG 18766 / IAM 14443 / JCM 21226 / LMG 7866 / NBRC 102419 / NCTC 12128 / CDC 0568-73</strain>
    </source>
</reference>
<accession>B7LNG0</accession>
<protein>
    <recommendedName>
        <fullName evidence="1">Sigma factor-binding protein Crl</fullName>
    </recommendedName>
</protein>
<evidence type="ECO:0000255" key="1">
    <source>
        <dbReference type="HAMAP-Rule" id="MF_01178"/>
    </source>
</evidence>
<keyword id="KW-0010">Activator</keyword>
<keyword id="KW-0175">Coiled coil</keyword>
<keyword id="KW-0963">Cytoplasm</keyword>
<keyword id="KW-0804">Transcription</keyword>
<keyword id="KW-0805">Transcription regulation</keyword>
<feature type="chain" id="PRO_1000138142" description="Sigma factor-binding protein Crl">
    <location>
        <begin position="1"/>
        <end position="133"/>
    </location>
</feature>
<feature type="region of interest" description="Essential for activity" evidence="1">
    <location>
        <begin position="99"/>
        <end position="122"/>
    </location>
</feature>
<feature type="coiled-coil region" evidence="1">
    <location>
        <begin position="90"/>
        <end position="116"/>
    </location>
</feature>
<proteinExistence type="inferred from homology"/>
<sequence length="133" mass="15612">MTLPSGHPKSRLIKKFTALGPYIREGKCEDNRFFFDCLAVCVNVKPAPEVREFWGWWMELEAQESRFTYSYQFGLFDKAGDWKSVPVKDAEVVERLEHTLREFHEKLRELLSTLNLKLEPADDFRDEPVKLTA</sequence>
<name>CRL_ESCF3</name>